<sequence length="238" mass="27111">MEKEKKDDEKPDLENSVDFSEQFNQLELLKTHGHLIPTGTQSLWVGNSDEDEEQEEKNEEWYQLQEKKMEKDPSKLLLWAAEKNRLATVQRLLSEKAAEVNTRDEDEYTPLHRAAYSGHIDVVRELVAKGADVHAVTVDGWTPLHSACKWNNTKVASFLLQHDADINAQTKGLLTPLHLAAGNRDSRDTLELLLMNRYIKPELKNNSQETASDIARRTSIYHYLFEIAEGCTNSSPPS</sequence>
<proteinExistence type="evidence at protein level"/>
<evidence type="ECO:0000250" key="1">
    <source>
        <dbReference type="UniProtKB" id="Q8WVL7"/>
    </source>
</evidence>
<evidence type="ECO:0000256" key="2">
    <source>
        <dbReference type="SAM" id="MobiDB-lite"/>
    </source>
</evidence>
<evidence type="ECO:0000269" key="3">
    <source>
    </source>
</evidence>
<evidence type="ECO:0000269" key="4">
    <source>
    </source>
</evidence>
<evidence type="ECO:0000305" key="5"/>
<name>ANR49_MOUSE</name>
<accession>Q8VE42</accession>
<accession>Q9Z2S1</accession>
<dbReference type="EMBL" id="AF028722">
    <property type="protein sequence ID" value="AAD04809.1"/>
    <property type="molecule type" value="mRNA"/>
</dbReference>
<dbReference type="EMBL" id="AK132850">
    <property type="protein sequence ID" value="BAE21393.1"/>
    <property type="molecule type" value="mRNA"/>
</dbReference>
<dbReference type="EMBL" id="BC019777">
    <property type="protein sequence ID" value="AAH19777.1"/>
    <property type="molecule type" value="mRNA"/>
</dbReference>
<dbReference type="CCDS" id="CCDS22826.1"/>
<dbReference type="RefSeq" id="NP_001335189.1">
    <property type="nucleotide sequence ID" value="NM_001348260.1"/>
</dbReference>
<dbReference type="RefSeq" id="NP_062657.2">
    <property type="nucleotide sequence ID" value="NM_019683.4"/>
</dbReference>
<dbReference type="RefSeq" id="XP_006510566.1">
    <property type="nucleotide sequence ID" value="XM_006510503.3"/>
</dbReference>
<dbReference type="SMR" id="Q8VE42"/>
<dbReference type="BioGRID" id="208022">
    <property type="interactions" value="5"/>
</dbReference>
<dbReference type="FunCoup" id="Q8VE42">
    <property type="interactions" value="1469"/>
</dbReference>
<dbReference type="IntAct" id="Q8VE42">
    <property type="interactions" value="2"/>
</dbReference>
<dbReference type="STRING" id="10090.ENSMUSP00000151079"/>
<dbReference type="iPTMnet" id="Q8VE42"/>
<dbReference type="PhosphoSitePlus" id="Q8VE42"/>
<dbReference type="SwissPalm" id="Q8VE42"/>
<dbReference type="PaxDb" id="10090-ENSMUSP00000034406"/>
<dbReference type="PeptideAtlas" id="Q8VE42"/>
<dbReference type="ProteomicsDB" id="296258"/>
<dbReference type="Pumba" id="Q8VE42"/>
<dbReference type="Antibodypedia" id="51056">
    <property type="antibodies" value="125 antibodies from 19 providers"/>
</dbReference>
<dbReference type="DNASU" id="56503"/>
<dbReference type="Ensembl" id="ENSMUST00000034406.4">
    <property type="protein sequence ID" value="ENSMUSP00000034406.4"/>
    <property type="gene ID" value="ENSMUSG00000031931.5"/>
</dbReference>
<dbReference type="Ensembl" id="ENSMUST00000216037.2">
    <property type="protein sequence ID" value="ENSMUSP00000149874.2"/>
    <property type="gene ID" value="ENSMUSG00000031931.5"/>
</dbReference>
<dbReference type="Ensembl" id="ENSMUST00000216372.2">
    <property type="protein sequence ID" value="ENSMUSP00000151079.2"/>
    <property type="gene ID" value="ENSMUSG00000031931.5"/>
</dbReference>
<dbReference type="GeneID" id="56503"/>
<dbReference type="KEGG" id="mmu:56503"/>
<dbReference type="UCSC" id="uc009ofa.1">
    <property type="organism name" value="mouse"/>
</dbReference>
<dbReference type="AGR" id="MGI:1930842"/>
<dbReference type="CTD" id="54851"/>
<dbReference type="MGI" id="MGI:1930842">
    <property type="gene designation" value="Ankrd49"/>
</dbReference>
<dbReference type="VEuPathDB" id="HostDB:ENSMUSG00000031931"/>
<dbReference type="eggNOG" id="KOG0512">
    <property type="taxonomic scope" value="Eukaryota"/>
</dbReference>
<dbReference type="GeneTree" id="ENSGT00390000003919"/>
<dbReference type="HOGENOM" id="CLU_000134_19_1_1"/>
<dbReference type="InParanoid" id="Q8VE42"/>
<dbReference type="OMA" id="NRYVKPD"/>
<dbReference type="OrthoDB" id="19174at2759"/>
<dbReference type="PhylomeDB" id="Q8VE42"/>
<dbReference type="TreeFam" id="TF351259"/>
<dbReference type="BioGRID-ORCS" id="56503">
    <property type="hits" value="27 hits in 78 CRISPR screens"/>
</dbReference>
<dbReference type="ChiTaRS" id="Ankrd49">
    <property type="organism name" value="mouse"/>
</dbReference>
<dbReference type="PRO" id="PR:Q8VE42"/>
<dbReference type="Proteomes" id="UP000000589">
    <property type="component" value="Chromosome 9"/>
</dbReference>
<dbReference type="RNAct" id="Q8VE42">
    <property type="molecule type" value="protein"/>
</dbReference>
<dbReference type="Bgee" id="ENSMUSG00000031931">
    <property type="expression patterns" value="Expressed in spermatid and 248 other cell types or tissues"/>
</dbReference>
<dbReference type="ExpressionAtlas" id="Q8VE42">
    <property type="expression patterns" value="baseline and differential"/>
</dbReference>
<dbReference type="GO" id="GO:0005634">
    <property type="term" value="C:nucleus"/>
    <property type="evidence" value="ECO:0007669"/>
    <property type="project" value="UniProtKB-SubCell"/>
</dbReference>
<dbReference type="GO" id="GO:0030154">
    <property type="term" value="P:cell differentiation"/>
    <property type="evidence" value="ECO:0007669"/>
    <property type="project" value="UniProtKB-KW"/>
</dbReference>
<dbReference type="GO" id="GO:0045893">
    <property type="term" value="P:positive regulation of DNA-templated transcription"/>
    <property type="evidence" value="ECO:0007669"/>
    <property type="project" value="Ensembl"/>
</dbReference>
<dbReference type="GO" id="GO:0007283">
    <property type="term" value="P:spermatogenesis"/>
    <property type="evidence" value="ECO:0007669"/>
    <property type="project" value="UniProtKB-KW"/>
</dbReference>
<dbReference type="FunFam" id="1.25.40.20:FF:000215">
    <property type="entry name" value="ankyrin repeat domain-containing protein 49"/>
    <property type="match status" value="1"/>
</dbReference>
<dbReference type="Gene3D" id="1.25.40.20">
    <property type="entry name" value="Ankyrin repeat-containing domain"/>
    <property type="match status" value="2"/>
</dbReference>
<dbReference type="InterPro" id="IPR002110">
    <property type="entry name" value="Ankyrin_rpt"/>
</dbReference>
<dbReference type="InterPro" id="IPR036770">
    <property type="entry name" value="Ankyrin_rpt-contain_sf"/>
</dbReference>
<dbReference type="PANTHER" id="PTHR24198">
    <property type="entry name" value="ANKYRIN REPEAT AND PROTEIN KINASE DOMAIN-CONTAINING PROTEIN"/>
    <property type="match status" value="1"/>
</dbReference>
<dbReference type="PANTHER" id="PTHR24198:SF165">
    <property type="entry name" value="ANKYRIN REPEAT-CONTAINING PROTEIN-RELATED"/>
    <property type="match status" value="1"/>
</dbReference>
<dbReference type="Pfam" id="PF00023">
    <property type="entry name" value="Ank"/>
    <property type="match status" value="1"/>
</dbReference>
<dbReference type="Pfam" id="PF12796">
    <property type="entry name" value="Ank_2"/>
    <property type="match status" value="1"/>
</dbReference>
<dbReference type="PRINTS" id="PR01415">
    <property type="entry name" value="ANKYRIN"/>
</dbReference>
<dbReference type="SMART" id="SM00248">
    <property type="entry name" value="ANK"/>
    <property type="match status" value="4"/>
</dbReference>
<dbReference type="SUPFAM" id="SSF48403">
    <property type="entry name" value="Ankyrin repeat"/>
    <property type="match status" value="1"/>
</dbReference>
<dbReference type="PROSITE" id="PS50297">
    <property type="entry name" value="ANK_REP_REGION"/>
    <property type="match status" value="1"/>
</dbReference>
<dbReference type="PROSITE" id="PS50088">
    <property type="entry name" value="ANK_REPEAT"/>
    <property type="match status" value="2"/>
</dbReference>
<gene>
    <name type="primary">Ankrd49</name>
    <name type="synonym">Fgif</name>
    <name type="synonym">Gbif</name>
</gene>
<keyword id="KW-0040">ANK repeat</keyword>
<keyword id="KW-0221">Differentiation</keyword>
<keyword id="KW-0539">Nucleus</keyword>
<keyword id="KW-0597">Phosphoprotein</keyword>
<keyword id="KW-1185">Reference proteome</keyword>
<keyword id="KW-0677">Repeat</keyword>
<keyword id="KW-0744">Spermatogenesis</keyword>
<comment type="function">
    <text evidence="4">May have a role in spermatogenesis where it promotes autophagy in response to serum starvation, via the NF-kappaB pathway.</text>
</comment>
<comment type="subcellular location">
    <subcellularLocation>
        <location evidence="4">Nucleus</location>
    </subcellularLocation>
</comment>
<comment type="tissue specificity">
    <text evidence="4">Expressed in spermatogonia, spermatocytes and round spermatids.</text>
</comment>
<comment type="developmental stage">
    <text evidence="3 4">Expressed in liver at embryonic stage 13 dpc, and in liver, brain and lung at 16 dpc (PubMed:11162141). In testis, expression levels steadily increase from 1 week after birth and plateau by 8 weeks after birth (PubMed:26043108).</text>
</comment>
<protein>
    <recommendedName>
        <fullName>Ankyrin repeat domain-containing protein 49</fullName>
    </recommendedName>
    <alternativeName>
        <fullName>Fetal globin-increasing factor</fullName>
    </alternativeName>
    <alternativeName>
        <fullName>Fetal globin-inducing factor</fullName>
    </alternativeName>
</protein>
<feature type="chain" id="PRO_0000244586" description="Ankyrin repeat domain-containing protein 49">
    <location>
        <begin position="1"/>
        <end position="238"/>
    </location>
</feature>
<feature type="repeat" description="ANK 1">
    <location>
        <begin position="72"/>
        <end position="105"/>
    </location>
</feature>
<feature type="repeat" description="ANK 2">
    <location>
        <begin position="106"/>
        <end position="135"/>
    </location>
</feature>
<feature type="repeat" description="ANK 3">
    <location>
        <begin position="139"/>
        <end position="168"/>
    </location>
</feature>
<feature type="repeat" description="ANK 4">
    <location>
        <begin position="172"/>
        <end position="205"/>
    </location>
</feature>
<feature type="region of interest" description="Disordered" evidence="2">
    <location>
        <begin position="38"/>
        <end position="57"/>
    </location>
</feature>
<feature type="compositionally biased region" description="Acidic residues" evidence="2">
    <location>
        <begin position="48"/>
        <end position="57"/>
    </location>
</feature>
<feature type="modified residue" description="Phosphoserine" evidence="1">
    <location>
        <position position="48"/>
    </location>
</feature>
<feature type="sequence conflict" description="In Ref. 1; AAD04809." evidence="5" ref="1">
    <original>L</original>
    <variation>Q</variation>
    <location>
        <position position="13"/>
    </location>
</feature>
<organism>
    <name type="scientific">Mus musculus</name>
    <name type="common">Mouse</name>
    <dbReference type="NCBI Taxonomy" id="10090"/>
    <lineage>
        <taxon>Eukaryota</taxon>
        <taxon>Metazoa</taxon>
        <taxon>Chordata</taxon>
        <taxon>Craniata</taxon>
        <taxon>Vertebrata</taxon>
        <taxon>Euteleostomi</taxon>
        <taxon>Mammalia</taxon>
        <taxon>Eutheria</taxon>
        <taxon>Euarchontoglires</taxon>
        <taxon>Glires</taxon>
        <taxon>Rodentia</taxon>
        <taxon>Myomorpha</taxon>
        <taxon>Muroidea</taxon>
        <taxon>Muridae</taxon>
        <taxon>Murinae</taxon>
        <taxon>Mus</taxon>
        <taxon>Mus</taxon>
    </lineage>
</organism>
<reference key="1">
    <citation type="journal article" date="2001" name="Blood Cells Mol. Dis.">
        <title>Cloning and characterization of a potential transcriptional activator of human gamma-globin genes.</title>
        <authorList>
            <person name="Yang Y."/>
            <person name="Duan Z."/>
            <person name="Skarpidi E."/>
            <person name="Li Q."/>
            <person name="Papayannopoulou T."/>
            <person name="Stamatoyannopoulos G."/>
        </authorList>
    </citation>
    <scope>NUCLEOTIDE SEQUENCE [MRNA]</scope>
    <scope>DEVELOPMENTAL STAGE</scope>
    <scope>TISSUE SPECIFICITY</scope>
    <source>
        <tissue>Fetal liver</tissue>
    </source>
</reference>
<reference key="2">
    <citation type="journal article" date="2005" name="Science">
        <title>The transcriptional landscape of the mammalian genome.</title>
        <authorList>
            <person name="Carninci P."/>
            <person name="Kasukawa T."/>
            <person name="Katayama S."/>
            <person name="Gough J."/>
            <person name="Frith M.C."/>
            <person name="Maeda N."/>
            <person name="Oyama R."/>
            <person name="Ravasi T."/>
            <person name="Lenhard B."/>
            <person name="Wells C."/>
            <person name="Kodzius R."/>
            <person name="Shimokawa K."/>
            <person name="Bajic V.B."/>
            <person name="Brenner S.E."/>
            <person name="Batalov S."/>
            <person name="Forrest A.R."/>
            <person name="Zavolan M."/>
            <person name="Davis M.J."/>
            <person name="Wilming L.G."/>
            <person name="Aidinis V."/>
            <person name="Allen J.E."/>
            <person name="Ambesi-Impiombato A."/>
            <person name="Apweiler R."/>
            <person name="Aturaliya R.N."/>
            <person name="Bailey T.L."/>
            <person name="Bansal M."/>
            <person name="Baxter L."/>
            <person name="Beisel K.W."/>
            <person name="Bersano T."/>
            <person name="Bono H."/>
            <person name="Chalk A.M."/>
            <person name="Chiu K.P."/>
            <person name="Choudhary V."/>
            <person name="Christoffels A."/>
            <person name="Clutterbuck D.R."/>
            <person name="Crowe M.L."/>
            <person name="Dalla E."/>
            <person name="Dalrymple B.P."/>
            <person name="de Bono B."/>
            <person name="Della Gatta G."/>
            <person name="di Bernardo D."/>
            <person name="Down T."/>
            <person name="Engstrom P."/>
            <person name="Fagiolini M."/>
            <person name="Faulkner G."/>
            <person name="Fletcher C.F."/>
            <person name="Fukushima T."/>
            <person name="Furuno M."/>
            <person name="Futaki S."/>
            <person name="Gariboldi M."/>
            <person name="Georgii-Hemming P."/>
            <person name="Gingeras T.R."/>
            <person name="Gojobori T."/>
            <person name="Green R.E."/>
            <person name="Gustincich S."/>
            <person name="Harbers M."/>
            <person name="Hayashi Y."/>
            <person name="Hensch T.K."/>
            <person name="Hirokawa N."/>
            <person name="Hill D."/>
            <person name="Huminiecki L."/>
            <person name="Iacono M."/>
            <person name="Ikeo K."/>
            <person name="Iwama A."/>
            <person name="Ishikawa T."/>
            <person name="Jakt M."/>
            <person name="Kanapin A."/>
            <person name="Katoh M."/>
            <person name="Kawasawa Y."/>
            <person name="Kelso J."/>
            <person name="Kitamura H."/>
            <person name="Kitano H."/>
            <person name="Kollias G."/>
            <person name="Krishnan S.P."/>
            <person name="Kruger A."/>
            <person name="Kummerfeld S.K."/>
            <person name="Kurochkin I.V."/>
            <person name="Lareau L.F."/>
            <person name="Lazarevic D."/>
            <person name="Lipovich L."/>
            <person name="Liu J."/>
            <person name="Liuni S."/>
            <person name="McWilliam S."/>
            <person name="Madan Babu M."/>
            <person name="Madera M."/>
            <person name="Marchionni L."/>
            <person name="Matsuda H."/>
            <person name="Matsuzawa S."/>
            <person name="Miki H."/>
            <person name="Mignone F."/>
            <person name="Miyake S."/>
            <person name="Morris K."/>
            <person name="Mottagui-Tabar S."/>
            <person name="Mulder N."/>
            <person name="Nakano N."/>
            <person name="Nakauchi H."/>
            <person name="Ng P."/>
            <person name="Nilsson R."/>
            <person name="Nishiguchi S."/>
            <person name="Nishikawa S."/>
            <person name="Nori F."/>
            <person name="Ohara O."/>
            <person name="Okazaki Y."/>
            <person name="Orlando V."/>
            <person name="Pang K.C."/>
            <person name="Pavan W.J."/>
            <person name="Pavesi G."/>
            <person name="Pesole G."/>
            <person name="Petrovsky N."/>
            <person name="Piazza S."/>
            <person name="Reed J."/>
            <person name="Reid J.F."/>
            <person name="Ring B.Z."/>
            <person name="Ringwald M."/>
            <person name="Rost B."/>
            <person name="Ruan Y."/>
            <person name="Salzberg S.L."/>
            <person name="Sandelin A."/>
            <person name="Schneider C."/>
            <person name="Schoenbach C."/>
            <person name="Sekiguchi K."/>
            <person name="Semple C.A."/>
            <person name="Seno S."/>
            <person name="Sessa L."/>
            <person name="Sheng Y."/>
            <person name="Shibata Y."/>
            <person name="Shimada H."/>
            <person name="Shimada K."/>
            <person name="Silva D."/>
            <person name="Sinclair B."/>
            <person name="Sperling S."/>
            <person name="Stupka E."/>
            <person name="Sugiura K."/>
            <person name="Sultana R."/>
            <person name="Takenaka Y."/>
            <person name="Taki K."/>
            <person name="Tammoja K."/>
            <person name="Tan S.L."/>
            <person name="Tang S."/>
            <person name="Taylor M.S."/>
            <person name="Tegner J."/>
            <person name="Teichmann S.A."/>
            <person name="Ueda H.R."/>
            <person name="van Nimwegen E."/>
            <person name="Verardo R."/>
            <person name="Wei C.L."/>
            <person name="Yagi K."/>
            <person name="Yamanishi H."/>
            <person name="Zabarovsky E."/>
            <person name="Zhu S."/>
            <person name="Zimmer A."/>
            <person name="Hide W."/>
            <person name="Bult C."/>
            <person name="Grimmond S.M."/>
            <person name="Teasdale R.D."/>
            <person name="Liu E.T."/>
            <person name="Brusic V."/>
            <person name="Quackenbush J."/>
            <person name="Wahlestedt C."/>
            <person name="Mattick J.S."/>
            <person name="Hume D.A."/>
            <person name="Kai C."/>
            <person name="Sasaki D."/>
            <person name="Tomaru Y."/>
            <person name="Fukuda S."/>
            <person name="Kanamori-Katayama M."/>
            <person name="Suzuki M."/>
            <person name="Aoki J."/>
            <person name="Arakawa T."/>
            <person name="Iida J."/>
            <person name="Imamura K."/>
            <person name="Itoh M."/>
            <person name="Kato T."/>
            <person name="Kawaji H."/>
            <person name="Kawagashira N."/>
            <person name="Kawashima T."/>
            <person name="Kojima M."/>
            <person name="Kondo S."/>
            <person name="Konno H."/>
            <person name="Nakano K."/>
            <person name="Ninomiya N."/>
            <person name="Nishio T."/>
            <person name="Okada M."/>
            <person name="Plessy C."/>
            <person name="Shibata K."/>
            <person name="Shiraki T."/>
            <person name="Suzuki S."/>
            <person name="Tagami M."/>
            <person name="Waki K."/>
            <person name="Watahiki A."/>
            <person name="Okamura-Oho Y."/>
            <person name="Suzuki H."/>
            <person name="Kawai J."/>
            <person name="Hayashizaki Y."/>
        </authorList>
    </citation>
    <scope>NUCLEOTIDE SEQUENCE [LARGE SCALE MRNA]</scope>
    <source>
        <strain>C57BL/6J</strain>
        <tissue>Testis</tissue>
    </source>
</reference>
<reference key="3">
    <citation type="journal article" date="2004" name="Genome Res.">
        <title>The status, quality, and expansion of the NIH full-length cDNA project: the Mammalian Gene Collection (MGC).</title>
        <authorList>
            <consortium name="The MGC Project Team"/>
        </authorList>
    </citation>
    <scope>NUCLEOTIDE SEQUENCE [LARGE SCALE MRNA]</scope>
    <source>
        <strain>FVB/N</strain>
        <tissue>Mammary tumor</tissue>
    </source>
</reference>
<reference key="4">
    <citation type="journal article" date="2010" name="Cell">
        <title>A tissue-specific atlas of mouse protein phosphorylation and expression.</title>
        <authorList>
            <person name="Huttlin E.L."/>
            <person name="Jedrychowski M.P."/>
            <person name="Elias J.E."/>
            <person name="Goswami T."/>
            <person name="Rad R."/>
            <person name="Beausoleil S.A."/>
            <person name="Villen J."/>
            <person name="Haas W."/>
            <person name="Sowa M.E."/>
            <person name="Gygi S.P."/>
        </authorList>
    </citation>
    <scope>IDENTIFICATION BY MASS SPECTROMETRY [LARGE SCALE ANALYSIS]</scope>
    <source>
        <tissue>Spleen</tissue>
    </source>
</reference>
<reference key="5">
    <citation type="journal article" date="2015" name="PLoS ONE">
        <title>The ankyrin repeat domain 49 (ANKRD49) augments autophagy of serum-starved GC-1 cells through the NF-kappaB pathway.</title>
        <authorList>
            <person name="Wang H.L."/>
            <person name="Fan S.S."/>
            <person name="Pang M."/>
            <person name="Liu Y.H."/>
            <person name="Guo M."/>
            <person name="Liang J.B."/>
            <person name="Zhang J.L."/>
            <person name="Yu B.F."/>
            <person name="Guo R."/>
            <person name="Xie J."/>
            <person name="Zheng G.P."/>
        </authorList>
    </citation>
    <scope>FUNCTION</scope>
    <scope>SUBCELLULAR LOCATION</scope>
    <scope>TISSUE SPECIFICITY</scope>
    <scope>DEVELOPMENTAL STAGE</scope>
</reference>